<keyword id="KW-0175">Coiled coil</keyword>
<keyword id="KW-0325">Glycoprotein</keyword>
<keyword id="KW-0472">Membrane</keyword>
<keyword id="KW-1185">Reference proteome</keyword>
<keyword id="KW-0812">Transmembrane</keyword>
<keyword id="KW-1133">Transmembrane helix</keyword>
<reference key="1">
    <citation type="journal article" date="2004" name="Eukaryot. Cell">
        <title>Identification of genes dependent on the MADS box transcription factor SrfA in Dictyostelium discoideum development.</title>
        <authorList>
            <person name="Escalante R."/>
            <person name="Iranfar N."/>
            <person name="Sastre L."/>
            <person name="Loomis W.F."/>
        </authorList>
    </citation>
    <scope>NUCLEOTIDE SEQUENCE [GENOMIC DNA]</scope>
    <scope>DEVELOPMENTAL STAGE</scope>
    <scope>INDUCTION BY SRFA</scope>
</reference>
<reference key="2">
    <citation type="journal article" date="2005" name="Nature">
        <title>The genome of the social amoeba Dictyostelium discoideum.</title>
        <authorList>
            <person name="Eichinger L."/>
            <person name="Pachebat J.A."/>
            <person name="Gloeckner G."/>
            <person name="Rajandream M.A."/>
            <person name="Sucgang R."/>
            <person name="Berriman M."/>
            <person name="Song J."/>
            <person name="Olsen R."/>
            <person name="Szafranski K."/>
            <person name="Xu Q."/>
            <person name="Tunggal B."/>
            <person name="Kummerfeld S."/>
            <person name="Madera M."/>
            <person name="Konfortov B.A."/>
            <person name="Rivero F."/>
            <person name="Bankier A.T."/>
            <person name="Lehmann R."/>
            <person name="Hamlin N."/>
            <person name="Davies R."/>
            <person name="Gaudet P."/>
            <person name="Fey P."/>
            <person name="Pilcher K."/>
            <person name="Chen G."/>
            <person name="Saunders D."/>
            <person name="Sodergren E.J."/>
            <person name="Davis P."/>
            <person name="Kerhornou A."/>
            <person name="Nie X."/>
            <person name="Hall N."/>
            <person name="Anjard C."/>
            <person name="Hemphill L."/>
            <person name="Bason N."/>
            <person name="Farbrother P."/>
            <person name="Desany B."/>
            <person name="Just E."/>
            <person name="Morio T."/>
            <person name="Rost R."/>
            <person name="Churcher C.M."/>
            <person name="Cooper J."/>
            <person name="Haydock S."/>
            <person name="van Driessche N."/>
            <person name="Cronin A."/>
            <person name="Goodhead I."/>
            <person name="Muzny D.M."/>
            <person name="Mourier T."/>
            <person name="Pain A."/>
            <person name="Lu M."/>
            <person name="Harper D."/>
            <person name="Lindsay R."/>
            <person name="Hauser H."/>
            <person name="James K.D."/>
            <person name="Quiles M."/>
            <person name="Madan Babu M."/>
            <person name="Saito T."/>
            <person name="Buchrieser C."/>
            <person name="Wardroper A."/>
            <person name="Felder M."/>
            <person name="Thangavelu M."/>
            <person name="Johnson D."/>
            <person name="Knights A."/>
            <person name="Loulseged H."/>
            <person name="Mungall K.L."/>
            <person name="Oliver K."/>
            <person name="Price C."/>
            <person name="Quail M.A."/>
            <person name="Urushihara H."/>
            <person name="Hernandez J."/>
            <person name="Rabbinowitsch E."/>
            <person name="Steffen D."/>
            <person name="Sanders M."/>
            <person name="Ma J."/>
            <person name="Kohara Y."/>
            <person name="Sharp S."/>
            <person name="Simmonds M.N."/>
            <person name="Spiegler S."/>
            <person name="Tivey A."/>
            <person name="Sugano S."/>
            <person name="White B."/>
            <person name="Walker D."/>
            <person name="Woodward J.R."/>
            <person name="Winckler T."/>
            <person name="Tanaka Y."/>
            <person name="Shaulsky G."/>
            <person name="Schleicher M."/>
            <person name="Weinstock G.M."/>
            <person name="Rosenthal A."/>
            <person name="Cox E.C."/>
            <person name="Chisholm R.L."/>
            <person name="Gibbs R.A."/>
            <person name="Loomis W.F."/>
            <person name="Platzer M."/>
            <person name="Kay R.R."/>
            <person name="Williams J.G."/>
            <person name="Dear P.H."/>
            <person name="Noegel A.A."/>
            <person name="Barrell B.G."/>
            <person name="Kuspa A."/>
        </authorList>
    </citation>
    <scope>NUCLEOTIDE SEQUENCE [LARGE SCALE GENOMIC DNA]</scope>
    <source>
        <strain>AX4</strain>
    </source>
</reference>
<reference key="3">
    <citation type="journal article" date="2004" name="Eukaryot. Cell">
        <title>Control of cell type proportioning in Dictyostelium discoideum by differentiation-inducing factor as determined by in situ hybridization.</title>
        <authorList>
            <person name="Maruo T."/>
            <person name="Sakamoto H."/>
            <person name="Iranfar N."/>
            <person name="Fuller D."/>
            <person name="Morio T."/>
            <person name="Urushihara H."/>
            <person name="Tanaka Y."/>
            <person name="Maeda M."/>
            <person name="Loomis W.F."/>
        </authorList>
    </citation>
    <scope>IDENTIFICATION</scope>
</reference>
<reference key="4">
    <citation type="journal article" date="2006" name="Cell. Microbiol.">
        <title>Dictyostelium transcriptional host cell response upon infection with Legionella.</title>
        <authorList>
            <person name="Farbrother P."/>
            <person name="Wagner C."/>
            <person name="Na J."/>
            <person name="Tunggal B."/>
            <person name="Morio T."/>
            <person name="Urushihara H."/>
            <person name="Tanaka Y."/>
            <person name="Schleicher M."/>
            <person name="Steinert M."/>
            <person name="Eichinger L."/>
        </authorList>
    </citation>
    <scope>INDUCTION [LARGE SCALE ANALYSIS]</scope>
</reference>
<reference key="5">
    <citation type="journal article" date="2007" name="BMC Genomics">
        <title>STATc is a key regulator of the transcriptional response to hyperosmotic shock.</title>
        <authorList>
            <person name="Na J."/>
            <person name="Tunggal B."/>
            <person name="Eichinger L."/>
        </authorList>
    </citation>
    <scope>INDUCTION [LARGE SCALE ANALYSIS]</scope>
</reference>
<reference key="6">
    <citation type="journal article" date="2008" name="BMC Genomics">
        <title>Genome-wide transcriptional changes induced by phagocytosis or growth on bacteria in Dictyostelium.</title>
        <authorList>
            <person name="Sillo A."/>
            <person name="Bloomfield G."/>
            <person name="Balest A."/>
            <person name="Balbo A."/>
            <person name="Pergolizzi B."/>
            <person name="Peracino B."/>
            <person name="Skelton J."/>
            <person name="Ivens A."/>
            <person name="Bozzaro S."/>
        </authorList>
    </citation>
    <scope>INDUCTION [LARGE SCALE ANALYSIS]</scope>
</reference>
<proteinExistence type="evidence at transcript level"/>
<sequence>MGRVEDQIKDNYNSLSHEGERLNREAKIESEKLKNNAKLDAKDMKKDIDESVHSSWETVKEGAKTVQDYISSGIESVKHTITTEPAQKDMENLKHNVNHNLEEAEKEGSSVLNNISNFFKGSAEEAKSEAERIGYEAYKDGDQFVGDVHKNFKRTANETQKDANRLTSDVKNESNKIYKDIKDESNKLYNDVKGESSKIYNGAKKEGSKLATDLKKDTQYVADETKKMAADLKNKAADTYQDLSHDASKKATQLKKKASETLDESADAIEHQFDIMKKDFRHLNQRNGMIWGSIGLIGGATATSYLFPSASPMAKFTFIAGLASLGGYYGLHQPHNKIVDNAFHKANNKKEELKKKI</sequence>
<feature type="chain" id="PRO_0000391761" description="SrfA-induced gene J protein">
    <location>
        <begin position="1"/>
        <end position="357"/>
    </location>
</feature>
<feature type="transmembrane region" description="Helical" evidence="1">
    <location>
        <begin position="290"/>
        <end position="307"/>
    </location>
</feature>
<feature type="region of interest" description="Disordered" evidence="2">
    <location>
        <begin position="1"/>
        <end position="29"/>
    </location>
</feature>
<feature type="coiled-coil region" evidence="1">
    <location>
        <begin position="5"/>
        <end position="51"/>
    </location>
</feature>
<feature type="coiled-coil region" evidence="1">
    <location>
        <begin position="150"/>
        <end position="177"/>
    </location>
</feature>
<feature type="coiled-coil region" evidence="1">
    <location>
        <begin position="223"/>
        <end position="270"/>
    </location>
</feature>
<feature type="compositionally biased region" description="Basic and acidic residues" evidence="2">
    <location>
        <begin position="17"/>
        <end position="29"/>
    </location>
</feature>
<feature type="glycosylation site" description="N-linked (GlcNAc...) asparagine" evidence="1">
    <location>
        <position position="114"/>
    </location>
</feature>
<feature type="glycosylation site" description="N-linked (GlcNAc...) asparagine" evidence="1">
    <location>
        <position position="157"/>
    </location>
</feature>
<feature type="glycosylation site" description="N-linked (GlcNAc...) asparagine" evidence="1">
    <location>
        <position position="172"/>
    </location>
</feature>
<comment type="subcellular location">
    <subcellularLocation>
        <location evidence="7">Membrane</location>
        <topology evidence="7">Single-pass membrane protein</topology>
    </subcellularLocation>
</comment>
<comment type="developmental stage">
    <text evidence="3">Expressed early in development and up-regulated late in development.</text>
</comment>
<comment type="induction">
    <text evidence="3 4 5 6">Induced by srfA, during development. Down-regulated by phagocytic stimuli. Up-regulated by Legionella pneumophila infection. Rapidly up-regulated by hyperosmotic stress, which is dependent on dstC. Shows early transcriptional response to sorbitol exposure.</text>
</comment>
<evidence type="ECO:0000255" key="1"/>
<evidence type="ECO:0000256" key="2">
    <source>
        <dbReference type="SAM" id="MobiDB-lite"/>
    </source>
</evidence>
<evidence type="ECO:0000269" key="3">
    <source>
    </source>
</evidence>
<evidence type="ECO:0000269" key="4">
    <source>
    </source>
</evidence>
<evidence type="ECO:0000269" key="5">
    <source>
    </source>
</evidence>
<evidence type="ECO:0000269" key="6">
    <source>
    </source>
</evidence>
<evidence type="ECO:0000305" key="7"/>
<organism>
    <name type="scientific">Dictyostelium discoideum</name>
    <name type="common">Social amoeba</name>
    <dbReference type="NCBI Taxonomy" id="44689"/>
    <lineage>
        <taxon>Eukaryota</taxon>
        <taxon>Amoebozoa</taxon>
        <taxon>Evosea</taxon>
        <taxon>Eumycetozoa</taxon>
        <taxon>Dictyostelia</taxon>
        <taxon>Dictyosteliales</taxon>
        <taxon>Dictyosteliaceae</taxon>
        <taxon>Dictyostelium</taxon>
    </lineage>
</organism>
<gene>
    <name type="primary">sigJ</name>
    <name type="ORF">DDB_G0269254</name>
</gene>
<dbReference type="EMBL" id="AY392441">
    <property type="protein sequence ID" value="AAQ98883.1"/>
    <property type="molecule type" value="Genomic_DNA"/>
</dbReference>
<dbReference type="EMBL" id="AAFI02000005">
    <property type="protein sequence ID" value="EAL71977.1"/>
    <property type="molecule type" value="Genomic_DNA"/>
</dbReference>
<dbReference type="RefSeq" id="XP_646353.1">
    <property type="nucleotide sequence ID" value="XM_641261.1"/>
</dbReference>
<dbReference type="FunCoup" id="Q6TMJ3">
    <property type="interactions" value="640"/>
</dbReference>
<dbReference type="GlyCosmos" id="Q6TMJ3">
    <property type="glycosylation" value="3 sites, No reported glycans"/>
</dbReference>
<dbReference type="GlyGen" id="Q6TMJ3">
    <property type="glycosylation" value="3 sites"/>
</dbReference>
<dbReference type="PaxDb" id="44689-DDB0191111"/>
<dbReference type="EnsemblProtists" id="EAL71977">
    <property type="protein sequence ID" value="EAL71977"/>
    <property type="gene ID" value="DDB_G0269254"/>
</dbReference>
<dbReference type="GeneID" id="8617308"/>
<dbReference type="KEGG" id="ddi:DDB_G0269254"/>
<dbReference type="dictyBase" id="DDB_G0269254">
    <property type="gene designation" value="sigJ"/>
</dbReference>
<dbReference type="VEuPathDB" id="AmoebaDB:DDB_G0269254"/>
<dbReference type="eggNOG" id="ENOG502RSQD">
    <property type="taxonomic scope" value="Eukaryota"/>
</dbReference>
<dbReference type="HOGENOM" id="CLU_777124_0_0_1"/>
<dbReference type="InParanoid" id="Q6TMJ3"/>
<dbReference type="OMA" id="TNRDTHD"/>
<dbReference type="PhylomeDB" id="Q6TMJ3"/>
<dbReference type="PRO" id="PR:Q6TMJ3"/>
<dbReference type="Proteomes" id="UP000002195">
    <property type="component" value="Chromosome 1"/>
</dbReference>
<dbReference type="GO" id="GO:0016020">
    <property type="term" value="C:membrane"/>
    <property type="evidence" value="ECO:0007669"/>
    <property type="project" value="UniProtKB-SubCell"/>
</dbReference>
<dbReference type="GO" id="GO:0006972">
    <property type="term" value="P:hyperosmotic response"/>
    <property type="evidence" value="ECO:0000270"/>
    <property type="project" value="dictyBase"/>
</dbReference>
<dbReference type="Gene3D" id="1.20.120.20">
    <property type="entry name" value="Apolipoprotein"/>
    <property type="match status" value="1"/>
</dbReference>
<dbReference type="PANTHER" id="PTHR47372">
    <property type="entry name" value="DAUER UP-REGULATED-RELATED"/>
    <property type="match status" value="1"/>
</dbReference>
<dbReference type="PANTHER" id="PTHR47372:SF11">
    <property type="entry name" value="RE19971P"/>
    <property type="match status" value="1"/>
</dbReference>
<dbReference type="SUPFAM" id="SSF58113">
    <property type="entry name" value="Apolipoprotein A-I"/>
    <property type="match status" value="2"/>
</dbReference>
<name>SIGJ_DICDI</name>
<protein>
    <recommendedName>
        <fullName>SrfA-induced gene J protein</fullName>
    </recommendedName>
</protein>
<accession>Q6TMJ3</accession>
<accession>Q55CX8</accession>